<reference key="1">
    <citation type="journal article" date="2005" name="Physiol. Genomics">
        <title>Cross-species analysis of the mammalian beta-defensin gene family: presence of syntenic gene clusters and preferential expression in the male reproductive tract.</title>
        <authorList>
            <person name="Patil A.A."/>
            <person name="Cai Y."/>
            <person name="Sang Y."/>
            <person name="Blecha F."/>
            <person name="Zhang G."/>
        </authorList>
    </citation>
    <scope>NUCLEOTIDE SEQUENCE [MRNA]</scope>
</reference>
<reference key="2">
    <citation type="submission" date="2006-11" db="EMBL/GenBank/DDBJ databases">
        <title>Evolution and sequence variation of human beta-defensin genes.</title>
        <authorList>
            <person name="Hollox E.J."/>
            <person name="Armour J.A.L."/>
        </authorList>
    </citation>
    <scope>NUCLEOTIDE SEQUENCE [GENOMIC DNA]</scope>
</reference>
<comment type="function">
    <text evidence="3">Has antibacterial activity.</text>
</comment>
<comment type="subcellular location">
    <subcellularLocation>
        <location evidence="3">Secreted</location>
    </subcellularLocation>
</comment>
<comment type="similarity">
    <text evidence="3">Belongs to the beta-defensin family.</text>
</comment>
<sequence>MKLLLLTLTVLLLLSQLTPGGTQRCWNLYGKCRYRCSKKERVYVYCINNKMCCVKPKYQPKERWWPF</sequence>
<organism>
    <name type="scientific">Pan troglodytes</name>
    <name type="common">Chimpanzee</name>
    <dbReference type="NCBI Taxonomy" id="9598"/>
    <lineage>
        <taxon>Eukaryota</taxon>
        <taxon>Metazoa</taxon>
        <taxon>Chordata</taxon>
        <taxon>Craniata</taxon>
        <taxon>Vertebrata</taxon>
        <taxon>Euteleostomi</taxon>
        <taxon>Mammalia</taxon>
        <taxon>Eutheria</taxon>
        <taxon>Euarchontoglires</taxon>
        <taxon>Primates</taxon>
        <taxon>Haplorrhini</taxon>
        <taxon>Catarrhini</taxon>
        <taxon>Hominidae</taxon>
        <taxon>Pan</taxon>
    </lineage>
</organism>
<evidence type="ECO:0000250" key="1"/>
<evidence type="ECO:0000255" key="2"/>
<evidence type="ECO:0000305" key="3"/>
<proteinExistence type="inferred from homology"/>
<dbReference type="EMBL" id="DQ012075">
    <property type="protein sequence ID" value="AAY59805.1"/>
    <property type="molecule type" value="mRNA"/>
</dbReference>
<dbReference type="EMBL" id="AM410139">
    <property type="protein sequence ID" value="CAL68954.1"/>
    <property type="molecule type" value="Genomic_DNA"/>
</dbReference>
<dbReference type="RefSeq" id="NP_001123240.1">
    <property type="nucleotide sequence ID" value="NM_001129768.1"/>
</dbReference>
<dbReference type="SMR" id="Q30KK5"/>
<dbReference type="STRING" id="9598.ENSPTRP00000022892"/>
<dbReference type="PaxDb" id="9598-ENSPTRP00000022892"/>
<dbReference type="Ensembl" id="ENSPTRT00000024802.2">
    <property type="protein sequence ID" value="ENSPTRP00000022892.1"/>
    <property type="gene ID" value="ENSPTRG00000013352.2"/>
</dbReference>
<dbReference type="GeneID" id="742057"/>
<dbReference type="KEGG" id="ptr:742057"/>
<dbReference type="CTD" id="245936"/>
<dbReference type="VGNC" id="VGNC:6091">
    <property type="gene designation" value="DEFB123"/>
</dbReference>
<dbReference type="eggNOG" id="ENOG502TIGY">
    <property type="taxonomic scope" value="Eukaryota"/>
</dbReference>
<dbReference type="GeneTree" id="ENSGT00940000162385"/>
<dbReference type="HOGENOM" id="CLU_181906_2_0_1"/>
<dbReference type="InParanoid" id="Q30KK5"/>
<dbReference type="OMA" id="RCWNLHG"/>
<dbReference type="OrthoDB" id="10704at9604"/>
<dbReference type="TreeFam" id="TF336381"/>
<dbReference type="Proteomes" id="UP000002277">
    <property type="component" value="Chromosome 20"/>
</dbReference>
<dbReference type="Bgee" id="ENSPTRG00000013352">
    <property type="expression patterns" value="Expressed in testis"/>
</dbReference>
<dbReference type="GO" id="GO:0005576">
    <property type="term" value="C:extracellular region"/>
    <property type="evidence" value="ECO:0007669"/>
    <property type="project" value="UniProtKB-SubCell"/>
</dbReference>
<dbReference type="GO" id="GO:0050829">
    <property type="term" value="P:defense response to Gram-negative bacterium"/>
    <property type="evidence" value="ECO:0007669"/>
    <property type="project" value="UniProtKB-ARBA"/>
</dbReference>
<dbReference type="GO" id="GO:0045087">
    <property type="term" value="P:innate immune response"/>
    <property type="evidence" value="ECO:0007669"/>
    <property type="project" value="InterPro"/>
</dbReference>
<dbReference type="Gene3D" id="3.10.360.10">
    <property type="entry name" value="Antimicrobial Peptide, Beta-defensin 2, Chain A"/>
    <property type="match status" value="1"/>
</dbReference>
<dbReference type="InterPro" id="IPR050544">
    <property type="entry name" value="Beta-defensin"/>
</dbReference>
<dbReference type="InterPro" id="IPR025933">
    <property type="entry name" value="Beta_defensin_dom"/>
</dbReference>
<dbReference type="PANTHER" id="PTHR15001:SF3">
    <property type="entry name" value="BETA-DEFENSIN 123"/>
    <property type="match status" value="1"/>
</dbReference>
<dbReference type="PANTHER" id="PTHR15001">
    <property type="entry name" value="BETA-DEFENSIN 123-RELATED"/>
    <property type="match status" value="1"/>
</dbReference>
<dbReference type="Pfam" id="PF13841">
    <property type="entry name" value="Defensin_beta_2"/>
    <property type="match status" value="1"/>
</dbReference>
<accession>Q30KK5</accession>
<accession>A4H234</accession>
<keyword id="KW-0044">Antibiotic</keyword>
<keyword id="KW-0929">Antimicrobial</keyword>
<keyword id="KW-0211">Defensin</keyword>
<keyword id="KW-1015">Disulfide bond</keyword>
<keyword id="KW-1185">Reference proteome</keyword>
<keyword id="KW-0964">Secreted</keyword>
<keyword id="KW-0732">Signal</keyword>
<gene>
    <name type="primary">DEFB123</name>
</gene>
<protein>
    <recommendedName>
        <fullName>Beta-defensin 123</fullName>
    </recommendedName>
    <alternativeName>
        <fullName>Defensin, beta 123</fullName>
    </alternativeName>
</protein>
<feature type="signal peptide" evidence="2">
    <location>
        <begin position="1"/>
        <end position="20"/>
    </location>
</feature>
<feature type="peptide" id="PRO_0000045351" description="Beta-defensin 123">
    <location>
        <begin position="21"/>
        <end position="67"/>
    </location>
</feature>
<feature type="disulfide bond" evidence="1">
    <location>
        <begin position="25"/>
        <end position="52"/>
    </location>
</feature>
<feature type="disulfide bond" evidence="1">
    <location>
        <begin position="32"/>
        <end position="46"/>
    </location>
</feature>
<feature type="disulfide bond" evidence="1">
    <location>
        <begin position="36"/>
        <end position="53"/>
    </location>
</feature>
<name>DB123_PANTR</name>